<organism>
    <name type="scientific">Mus musculus</name>
    <name type="common">Mouse</name>
    <dbReference type="NCBI Taxonomy" id="10090"/>
    <lineage>
        <taxon>Eukaryota</taxon>
        <taxon>Metazoa</taxon>
        <taxon>Chordata</taxon>
        <taxon>Craniata</taxon>
        <taxon>Vertebrata</taxon>
        <taxon>Euteleostomi</taxon>
        <taxon>Mammalia</taxon>
        <taxon>Eutheria</taxon>
        <taxon>Euarchontoglires</taxon>
        <taxon>Glires</taxon>
        <taxon>Rodentia</taxon>
        <taxon>Myomorpha</taxon>
        <taxon>Muroidea</taxon>
        <taxon>Muridae</taxon>
        <taxon>Murinae</taxon>
        <taxon>Mus</taxon>
        <taxon>Mus</taxon>
    </lineage>
</organism>
<gene>
    <name evidence="7 9" type="primary">Nsun4</name>
    <name type="synonym">Shtap</name>
</gene>
<keyword id="KW-0025">Alternative splicing</keyword>
<keyword id="KW-0489">Methyltransferase</keyword>
<keyword id="KW-0496">Mitochondrion</keyword>
<keyword id="KW-0597">Phosphoprotein</keyword>
<keyword id="KW-1185">Reference proteome</keyword>
<keyword id="KW-0690">Ribosome biogenesis</keyword>
<keyword id="KW-0694">RNA-binding</keyword>
<keyword id="KW-0698">rRNA processing</keyword>
<keyword id="KW-0699">rRNA-binding</keyword>
<keyword id="KW-0949">S-adenosyl-L-methionine</keyword>
<keyword id="KW-0808">Transferase</keyword>
<keyword id="KW-0809">Transit peptide</keyword>
<dbReference type="EC" id="2.1.1.-" evidence="1"/>
<dbReference type="EMBL" id="AK009285">
    <property type="protein sequence ID" value="BAB26195.1"/>
    <property type="molecule type" value="mRNA"/>
</dbReference>
<dbReference type="EMBL" id="AK012994">
    <property type="protein sequence ID" value="BAB28584.1"/>
    <property type="molecule type" value="mRNA"/>
</dbReference>
<dbReference type="EMBL" id="AL627105">
    <property type="status" value="NOT_ANNOTATED_CDS"/>
    <property type="molecule type" value="Genomic_DNA"/>
</dbReference>
<dbReference type="EMBL" id="BC024628">
    <property type="protein sequence ID" value="AAH24628.1"/>
    <property type="molecule type" value="mRNA"/>
</dbReference>
<dbReference type="CCDS" id="CCDS18502.1">
    <molecule id="Q9CZ57-1"/>
</dbReference>
<dbReference type="RefSeq" id="NP_082418.1">
    <molecule id="Q9CZ57-1"/>
    <property type="nucleotide sequence ID" value="NM_028142.5"/>
</dbReference>
<dbReference type="SMR" id="Q9CZ57"/>
<dbReference type="IntAct" id="Q9CZ57">
    <property type="interactions" value="1"/>
</dbReference>
<dbReference type="MINT" id="Q9CZ57"/>
<dbReference type="STRING" id="10090.ENSMUSP00000030475"/>
<dbReference type="iPTMnet" id="Q9CZ57"/>
<dbReference type="PhosphoSitePlus" id="Q9CZ57"/>
<dbReference type="PeptideAtlas" id="Q9CZ57"/>
<dbReference type="ProteomicsDB" id="293752">
    <molecule id="Q9CZ57-1"/>
</dbReference>
<dbReference type="ProteomicsDB" id="293753">
    <molecule id="Q9CZ57-2"/>
</dbReference>
<dbReference type="Pumba" id="Q9CZ57"/>
<dbReference type="Antibodypedia" id="32791">
    <property type="antibodies" value="66 antibodies from 20 providers"/>
</dbReference>
<dbReference type="DNASU" id="72181"/>
<dbReference type="Ensembl" id="ENSMUST00000030475.3">
    <molecule id="Q9CZ57-1"/>
    <property type="protein sequence ID" value="ENSMUSP00000030475.2"/>
    <property type="gene ID" value="ENSMUSG00000028706.15"/>
</dbReference>
<dbReference type="GeneID" id="72181"/>
<dbReference type="KEGG" id="mmu:72181"/>
<dbReference type="UCSC" id="uc008ufu.2">
    <molecule id="Q9CZ57-1"/>
    <property type="organism name" value="mouse"/>
</dbReference>
<dbReference type="UCSC" id="uc012djh.1">
    <molecule id="Q9CZ57-2"/>
    <property type="organism name" value="mouse"/>
</dbReference>
<dbReference type="AGR" id="MGI:1919431"/>
<dbReference type="CTD" id="387338"/>
<dbReference type="MGI" id="MGI:1919431">
    <property type="gene designation" value="Nsun4"/>
</dbReference>
<dbReference type="VEuPathDB" id="HostDB:ENSMUSG00000028706"/>
<dbReference type="GeneTree" id="ENSGT00500000045816"/>
<dbReference type="HOGENOM" id="CLU_041061_2_0_1"/>
<dbReference type="OrthoDB" id="8020218at2759"/>
<dbReference type="PhylomeDB" id="Q9CZ57"/>
<dbReference type="TreeFam" id="TF321304"/>
<dbReference type="BioGRID-ORCS" id="72181">
    <property type="hits" value="22 hits in 79 CRISPR screens"/>
</dbReference>
<dbReference type="ChiTaRS" id="Nsun4">
    <property type="organism name" value="mouse"/>
</dbReference>
<dbReference type="Proteomes" id="UP000000589">
    <property type="component" value="Chromosome 4"/>
</dbReference>
<dbReference type="Bgee" id="ENSMUSG00000028706">
    <property type="expression patterns" value="Expressed in primary oocyte and 272 other cell types or tissues"/>
</dbReference>
<dbReference type="ExpressionAtlas" id="Q9CZ57">
    <property type="expression patterns" value="baseline and differential"/>
</dbReference>
<dbReference type="GO" id="GO:0005762">
    <property type="term" value="C:mitochondrial large ribosomal subunit"/>
    <property type="evidence" value="ECO:0000266"/>
    <property type="project" value="MGI"/>
</dbReference>
<dbReference type="GO" id="GO:0005759">
    <property type="term" value="C:mitochondrial matrix"/>
    <property type="evidence" value="ECO:0000250"/>
    <property type="project" value="UniProtKB"/>
</dbReference>
<dbReference type="GO" id="GO:0005739">
    <property type="term" value="C:mitochondrion"/>
    <property type="evidence" value="ECO:0000314"/>
    <property type="project" value="MGI"/>
</dbReference>
<dbReference type="GO" id="GO:0062152">
    <property type="term" value="F:mRNA (cytidine-5-)-methyltransferase activity"/>
    <property type="evidence" value="ECO:0000250"/>
    <property type="project" value="UniProtKB"/>
</dbReference>
<dbReference type="GO" id="GO:0070181">
    <property type="term" value="F:small ribosomal subunit rRNA binding"/>
    <property type="evidence" value="ECO:0000314"/>
    <property type="project" value="UniProtKB"/>
</dbReference>
<dbReference type="GO" id="GO:0042256">
    <property type="term" value="P:cytosolic ribosome assembly"/>
    <property type="evidence" value="ECO:0000315"/>
    <property type="project" value="UniProtKB"/>
</dbReference>
<dbReference type="GO" id="GO:0000957">
    <property type="term" value="P:mitochondrial RNA catabolic process"/>
    <property type="evidence" value="ECO:0000250"/>
    <property type="project" value="UniProtKB"/>
</dbReference>
<dbReference type="GO" id="GO:0070131">
    <property type="term" value="P:positive regulation of mitochondrial translation"/>
    <property type="evidence" value="ECO:0000315"/>
    <property type="project" value="UniProtKB"/>
</dbReference>
<dbReference type="GO" id="GO:0031167">
    <property type="term" value="P:rRNA methylation"/>
    <property type="evidence" value="ECO:0000315"/>
    <property type="project" value="UniProtKB"/>
</dbReference>
<dbReference type="CDD" id="cd02440">
    <property type="entry name" value="AdoMet_MTases"/>
    <property type="match status" value="1"/>
</dbReference>
<dbReference type="FunFam" id="3.40.50.150:FF:000055">
    <property type="entry name" value="5-methylcytosine rRNA methyltransferase NSUN4"/>
    <property type="match status" value="1"/>
</dbReference>
<dbReference type="Gene3D" id="6.20.240.40">
    <property type="match status" value="1"/>
</dbReference>
<dbReference type="Gene3D" id="3.40.50.150">
    <property type="entry name" value="Vaccinia Virus protein VP39"/>
    <property type="match status" value="1"/>
</dbReference>
<dbReference type="InterPro" id="IPR049560">
    <property type="entry name" value="MeTrfase_RsmB-F_NOP2_cat"/>
</dbReference>
<dbReference type="InterPro" id="IPR001678">
    <property type="entry name" value="MeTrfase_RsmB-F_NOP2_dom"/>
</dbReference>
<dbReference type="InterPro" id="IPR023267">
    <property type="entry name" value="RCMT"/>
</dbReference>
<dbReference type="InterPro" id="IPR029063">
    <property type="entry name" value="SAM-dependent_MTases_sf"/>
</dbReference>
<dbReference type="PANTHER" id="PTHR22808:SF3">
    <property type="entry name" value="5-METHYLCYTOSINE RRNA METHYLTRANSFERASE NSUN4"/>
    <property type="match status" value="1"/>
</dbReference>
<dbReference type="PANTHER" id="PTHR22808">
    <property type="entry name" value="NCL1 YEAST -RELATED NOL1/NOP2/FMU SUN DOMAIN-CONTAINING"/>
    <property type="match status" value="1"/>
</dbReference>
<dbReference type="Pfam" id="PF01189">
    <property type="entry name" value="Methyltr_RsmB-F"/>
    <property type="match status" value="1"/>
</dbReference>
<dbReference type="PRINTS" id="PR02008">
    <property type="entry name" value="RCMTFAMILY"/>
</dbReference>
<dbReference type="SUPFAM" id="SSF53335">
    <property type="entry name" value="S-adenosyl-L-methionine-dependent methyltransferases"/>
    <property type="match status" value="1"/>
</dbReference>
<dbReference type="PROSITE" id="PS51686">
    <property type="entry name" value="SAM_MT_RSMB_NOP"/>
    <property type="match status" value="1"/>
</dbReference>
<protein>
    <recommendedName>
        <fullName>5-cytosine rRNA methyltransferase NSUN4</fullName>
        <ecNumber evidence="1">2.1.1.-</ecNumber>
    </recommendedName>
    <alternativeName>
        <fullName evidence="8">5-cytosine tRNA methyltransferase NSUN4</fullName>
        <ecNumber evidence="1">2.1.1.-</ecNumber>
    </alternativeName>
    <alternativeName>
        <fullName>NOL1/NOP2/Sun domain family member 4</fullName>
    </alternativeName>
    <alternativeName>
        <fullName>Sperm head and tail associated protein</fullName>
    </alternativeName>
</protein>
<accession>Q9CZ57</accession>
<accession>Q9D7F0</accession>
<reference key="1">
    <citation type="journal article" date="2005" name="Science">
        <title>The transcriptional landscape of the mammalian genome.</title>
        <authorList>
            <person name="Carninci P."/>
            <person name="Kasukawa T."/>
            <person name="Katayama S."/>
            <person name="Gough J."/>
            <person name="Frith M.C."/>
            <person name="Maeda N."/>
            <person name="Oyama R."/>
            <person name="Ravasi T."/>
            <person name="Lenhard B."/>
            <person name="Wells C."/>
            <person name="Kodzius R."/>
            <person name="Shimokawa K."/>
            <person name="Bajic V.B."/>
            <person name="Brenner S.E."/>
            <person name="Batalov S."/>
            <person name="Forrest A.R."/>
            <person name="Zavolan M."/>
            <person name="Davis M.J."/>
            <person name="Wilming L.G."/>
            <person name="Aidinis V."/>
            <person name="Allen J.E."/>
            <person name="Ambesi-Impiombato A."/>
            <person name="Apweiler R."/>
            <person name="Aturaliya R.N."/>
            <person name="Bailey T.L."/>
            <person name="Bansal M."/>
            <person name="Baxter L."/>
            <person name="Beisel K.W."/>
            <person name="Bersano T."/>
            <person name="Bono H."/>
            <person name="Chalk A.M."/>
            <person name="Chiu K.P."/>
            <person name="Choudhary V."/>
            <person name="Christoffels A."/>
            <person name="Clutterbuck D.R."/>
            <person name="Crowe M.L."/>
            <person name="Dalla E."/>
            <person name="Dalrymple B.P."/>
            <person name="de Bono B."/>
            <person name="Della Gatta G."/>
            <person name="di Bernardo D."/>
            <person name="Down T."/>
            <person name="Engstrom P."/>
            <person name="Fagiolini M."/>
            <person name="Faulkner G."/>
            <person name="Fletcher C.F."/>
            <person name="Fukushima T."/>
            <person name="Furuno M."/>
            <person name="Futaki S."/>
            <person name="Gariboldi M."/>
            <person name="Georgii-Hemming P."/>
            <person name="Gingeras T.R."/>
            <person name="Gojobori T."/>
            <person name="Green R.E."/>
            <person name="Gustincich S."/>
            <person name="Harbers M."/>
            <person name="Hayashi Y."/>
            <person name="Hensch T.K."/>
            <person name="Hirokawa N."/>
            <person name="Hill D."/>
            <person name="Huminiecki L."/>
            <person name="Iacono M."/>
            <person name="Ikeo K."/>
            <person name="Iwama A."/>
            <person name="Ishikawa T."/>
            <person name="Jakt M."/>
            <person name="Kanapin A."/>
            <person name="Katoh M."/>
            <person name="Kawasawa Y."/>
            <person name="Kelso J."/>
            <person name="Kitamura H."/>
            <person name="Kitano H."/>
            <person name="Kollias G."/>
            <person name="Krishnan S.P."/>
            <person name="Kruger A."/>
            <person name="Kummerfeld S.K."/>
            <person name="Kurochkin I.V."/>
            <person name="Lareau L.F."/>
            <person name="Lazarevic D."/>
            <person name="Lipovich L."/>
            <person name="Liu J."/>
            <person name="Liuni S."/>
            <person name="McWilliam S."/>
            <person name="Madan Babu M."/>
            <person name="Madera M."/>
            <person name="Marchionni L."/>
            <person name="Matsuda H."/>
            <person name="Matsuzawa S."/>
            <person name="Miki H."/>
            <person name="Mignone F."/>
            <person name="Miyake S."/>
            <person name="Morris K."/>
            <person name="Mottagui-Tabar S."/>
            <person name="Mulder N."/>
            <person name="Nakano N."/>
            <person name="Nakauchi H."/>
            <person name="Ng P."/>
            <person name="Nilsson R."/>
            <person name="Nishiguchi S."/>
            <person name="Nishikawa S."/>
            <person name="Nori F."/>
            <person name="Ohara O."/>
            <person name="Okazaki Y."/>
            <person name="Orlando V."/>
            <person name="Pang K.C."/>
            <person name="Pavan W.J."/>
            <person name="Pavesi G."/>
            <person name="Pesole G."/>
            <person name="Petrovsky N."/>
            <person name="Piazza S."/>
            <person name="Reed J."/>
            <person name="Reid J.F."/>
            <person name="Ring B.Z."/>
            <person name="Ringwald M."/>
            <person name="Rost B."/>
            <person name="Ruan Y."/>
            <person name="Salzberg S.L."/>
            <person name="Sandelin A."/>
            <person name="Schneider C."/>
            <person name="Schoenbach C."/>
            <person name="Sekiguchi K."/>
            <person name="Semple C.A."/>
            <person name="Seno S."/>
            <person name="Sessa L."/>
            <person name="Sheng Y."/>
            <person name="Shibata Y."/>
            <person name="Shimada H."/>
            <person name="Shimada K."/>
            <person name="Silva D."/>
            <person name="Sinclair B."/>
            <person name="Sperling S."/>
            <person name="Stupka E."/>
            <person name="Sugiura K."/>
            <person name="Sultana R."/>
            <person name="Takenaka Y."/>
            <person name="Taki K."/>
            <person name="Tammoja K."/>
            <person name="Tan S.L."/>
            <person name="Tang S."/>
            <person name="Taylor M.S."/>
            <person name="Tegner J."/>
            <person name="Teichmann S.A."/>
            <person name="Ueda H.R."/>
            <person name="van Nimwegen E."/>
            <person name="Verardo R."/>
            <person name="Wei C.L."/>
            <person name="Yagi K."/>
            <person name="Yamanishi H."/>
            <person name="Zabarovsky E."/>
            <person name="Zhu S."/>
            <person name="Zimmer A."/>
            <person name="Hide W."/>
            <person name="Bult C."/>
            <person name="Grimmond S.M."/>
            <person name="Teasdale R.D."/>
            <person name="Liu E.T."/>
            <person name="Brusic V."/>
            <person name="Quackenbush J."/>
            <person name="Wahlestedt C."/>
            <person name="Mattick J.S."/>
            <person name="Hume D.A."/>
            <person name="Kai C."/>
            <person name="Sasaki D."/>
            <person name="Tomaru Y."/>
            <person name="Fukuda S."/>
            <person name="Kanamori-Katayama M."/>
            <person name="Suzuki M."/>
            <person name="Aoki J."/>
            <person name="Arakawa T."/>
            <person name="Iida J."/>
            <person name="Imamura K."/>
            <person name="Itoh M."/>
            <person name="Kato T."/>
            <person name="Kawaji H."/>
            <person name="Kawagashira N."/>
            <person name="Kawashima T."/>
            <person name="Kojima M."/>
            <person name="Kondo S."/>
            <person name="Konno H."/>
            <person name="Nakano K."/>
            <person name="Ninomiya N."/>
            <person name="Nishio T."/>
            <person name="Okada M."/>
            <person name="Plessy C."/>
            <person name="Shibata K."/>
            <person name="Shiraki T."/>
            <person name="Suzuki S."/>
            <person name="Tagami M."/>
            <person name="Waki K."/>
            <person name="Watahiki A."/>
            <person name="Okamura-Oho Y."/>
            <person name="Suzuki H."/>
            <person name="Kawai J."/>
            <person name="Hayashizaki Y."/>
        </authorList>
    </citation>
    <scope>NUCLEOTIDE SEQUENCE [LARGE SCALE MRNA] (ISOFORMS 1 AND 2)</scope>
    <source>
        <strain>C57BL/6J</strain>
        <tissue>Tongue</tissue>
    </source>
</reference>
<reference key="2">
    <citation type="journal article" date="2009" name="PLoS Biol.">
        <title>Lineage-specific biology revealed by a finished genome assembly of the mouse.</title>
        <authorList>
            <person name="Church D.M."/>
            <person name="Goodstadt L."/>
            <person name="Hillier L.W."/>
            <person name="Zody M.C."/>
            <person name="Goldstein S."/>
            <person name="She X."/>
            <person name="Bult C.J."/>
            <person name="Agarwala R."/>
            <person name="Cherry J.L."/>
            <person name="DiCuccio M."/>
            <person name="Hlavina W."/>
            <person name="Kapustin Y."/>
            <person name="Meric P."/>
            <person name="Maglott D."/>
            <person name="Birtle Z."/>
            <person name="Marques A.C."/>
            <person name="Graves T."/>
            <person name="Zhou S."/>
            <person name="Teague B."/>
            <person name="Potamousis K."/>
            <person name="Churas C."/>
            <person name="Place M."/>
            <person name="Herschleb J."/>
            <person name="Runnheim R."/>
            <person name="Forrest D."/>
            <person name="Amos-Landgraf J."/>
            <person name="Schwartz D.C."/>
            <person name="Cheng Z."/>
            <person name="Lindblad-Toh K."/>
            <person name="Eichler E.E."/>
            <person name="Ponting C.P."/>
        </authorList>
    </citation>
    <scope>NUCLEOTIDE SEQUENCE [LARGE SCALE GENOMIC DNA]</scope>
    <source>
        <strain>C57BL/6J</strain>
    </source>
</reference>
<reference key="3">
    <citation type="journal article" date="2004" name="Genome Res.">
        <title>The status, quality, and expansion of the NIH full-length cDNA project: the Mammalian Gene Collection (MGC).</title>
        <authorList>
            <consortium name="The MGC Project Team"/>
        </authorList>
    </citation>
    <scope>NUCLEOTIDE SEQUENCE [LARGE SCALE MRNA] (ISOFORM 1)</scope>
    <source>
        <strain>FVB/N</strain>
        <tissue>Salivary gland</tissue>
    </source>
</reference>
<reference key="4">
    <citation type="journal article" date="2011" name="Cell Metab.">
        <title>MTERF4 regulates translation by targeting the methyltransferase NSUN4 to the mammalian mitochondrial ribosome.</title>
        <authorList>
            <person name="Camara Y."/>
            <person name="Asin-Cayuela J."/>
            <person name="Park C.B."/>
            <person name="Metodiev M.D."/>
            <person name="Shi Y."/>
            <person name="Ruzzenente B."/>
            <person name="Kukat C."/>
            <person name="Habermann B."/>
            <person name="Wibom R."/>
            <person name="Hultenby K."/>
            <person name="Franz T."/>
            <person name="Erdjument-Bromage H."/>
            <person name="Tempst P."/>
            <person name="Hallberg B.M."/>
            <person name="Gustafsson C.M."/>
            <person name="Larsson N.G."/>
        </authorList>
    </citation>
    <scope>SUBCELLULAR LOCATION</scope>
</reference>
<reference key="5">
    <citation type="journal article" date="2014" name="PLoS Genet.">
        <title>NSUN4 is a dual function mitochondrial protein required for both methylation of 12S rRNA and coordination of mitoribosomal assembly.</title>
        <authorList>
            <person name="Metodiev M.D."/>
            <person name="Spahr H."/>
            <person name="Loguercio Polosa P."/>
            <person name="Meharg C."/>
            <person name="Becker C."/>
            <person name="Altmueller J."/>
            <person name="Habermann B."/>
            <person name="Larsson N.G."/>
            <person name="Ruzzenente B."/>
        </authorList>
    </citation>
    <scope>FUNCTION IN 12S RRNA METHYLATION</scope>
    <scope>FUNCTION IN MITORIBOSOMAL ASSEMBLY</scope>
    <scope>DISRUPTION PHENOTYPE</scope>
</reference>
<comment type="function">
    <text evidence="2 5">Mitochondrial RNA cytosine C(5)-methyltransferase that methylates cytosine to 5-methylcytosine (m5C) in various RNAs, such as rRNAs, mRNAs and some long non-coding RNAs (lncRNAs) (PubMed:24516400). Involved in mitochondrial ribosome small subunit (SSU) maturation by catalyzing methylation of mitochondrial 12S rRNA; the function is independent of MTERFD2/MTERF4 and assembled mitochondrial ribosome large subunit (LSU) (PubMed:24516400). Targeted to LSU by MTERFD2/MTERF4 and probably is involved in a final step in ribosome biogenesis to ensure that SSU and LSU are assembled (By similarity). In vitro can methylate 16S rRNA of the LSU; the methylation is enhanced by MTERFD/MTERF4 (By similarity). Also acts as a regulator of innate immunity by marking double-stranded mitochondrial RNAs(mt-dsRNAs) generated in response to stress: catalyzes m5C modification on mitochondrial RNAs, such as a mRNAs and lncRNAs, with a preference for the termini of light-strand lncRNAs, promoting their degradation and cytosolic release (By similarity). Modified light-strand lncRNAs are then recognized by C1QBP reader and recruited to the mitochondrial degradosome complex, which promotes their degradation (By similarity).</text>
</comment>
<comment type="catalytic activity">
    <reaction evidence="2">
        <text>a cytidine in rRNA + S-adenosyl-L-methionine = a 5-methylcytidine in rRNA + S-adenosyl-L-homocysteine + H(+)</text>
        <dbReference type="Rhea" id="RHEA:61484"/>
        <dbReference type="Rhea" id="RHEA-COMP:15836"/>
        <dbReference type="Rhea" id="RHEA-COMP:15837"/>
        <dbReference type="ChEBI" id="CHEBI:15378"/>
        <dbReference type="ChEBI" id="CHEBI:57856"/>
        <dbReference type="ChEBI" id="CHEBI:59789"/>
        <dbReference type="ChEBI" id="CHEBI:74483"/>
        <dbReference type="ChEBI" id="CHEBI:82748"/>
    </reaction>
</comment>
<comment type="catalytic activity">
    <reaction evidence="2">
        <text>a cytidine in mRNA + S-adenosyl-L-methionine = a 5-methylcytidine in mRNA + S-adenosyl-L-homocysteine + H(+)</text>
        <dbReference type="Rhea" id="RHEA:61464"/>
        <dbReference type="Rhea" id="RHEA-COMP:15145"/>
        <dbReference type="Rhea" id="RHEA-COMP:15826"/>
        <dbReference type="ChEBI" id="CHEBI:15378"/>
        <dbReference type="ChEBI" id="CHEBI:57856"/>
        <dbReference type="ChEBI" id="CHEBI:59789"/>
        <dbReference type="ChEBI" id="CHEBI:74483"/>
        <dbReference type="ChEBI" id="CHEBI:82748"/>
    </reaction>
</comment>
<comment type="subunit">
    <text evidence="2">Heterodimer with MTERFD2/MTERF4; this interaction seems to be required for NSUN4 recruitment to the mitochondrial large ribosomal subunit.</text>
</comment>
<comment type="subcellular location">
    <subcellularLocation>
        <location evidence="4">Mitochondrion</location>
    </subcellularLocation>
</comment>
<comment type="alternative products">
    <event type="alternative splicing"/>
    <isoform>
        <id>Q9CZ57-1</id>
        <name>1</name>
        <sequence type="displayed"/>
    </isoform>
    <isoform>
        <id>Q9CZ57-2</id>
        <name>2</name>
        <sequence type="described" ref="VSP_025974 VSP_025975"/>
    </isoform>
    <isoform>
        <id>C4P6S0-1</id>
        <name>3</name>
        <sequence type="external"/>
    </isoform>
    <isoform>
        <id>C4P6S0-2</id>
        <name>4</name>
        <sequence type="external"/>
    </isoform>
    <text>Additional isoforms seem to exist.</text>
</comment>
<comment type="disruption phenotype">
    <text evidence="5">Embryonic lethal.</text>
</comment>
<comment type="similarity">
    <text evidence="3">Belongs to the class I-like SAM-binding methyltransferase superfamily. RsmB/NOP family.</text>
</comment>
<proteinExistence type="evidence at protein level"/>
<feature type="transit peptide" description="Mitochondrion" evidence="2">
    <location>
        <begin position="1"/>
        <end position="25"/>
    </location>
</feature>
<feature type="chain" id="PRO_0000289235" description="5-cytosine rRNA methyltransferase NSUN4">
    <location>
        <begin position="26"/>
        <end position="381"/>
    </location>
</feature>
<feature type="active site" description="Nucleophile" evidence="3">
    <location>
        <position position="307"/>
    </location>
</feature>
<feature type="binding site" evidence="2">
    <location>
        <position position="182"/>
    </location>
    <ligand>
        <name>S-adenosyl-L-methionine</name>
        <dbReference type="ChEBI" id="CHEBI:59789"/>
    </ligand>
</feature>
<feature type="binding site" evidence="2">
    <location>
        <position position="183"/>
    </location>
    <ligand>
        <name>S-adenosyl-L-methionine</name>
        <dbReference type="ChEBI" id="CHEBI:59789"/>
    </ligand>
</feature>
<feature type="binding site" evidence="2">
    <location>
        <position position="184"/>
    </location>
    <ligand>
        <name>S-adenosyl-L-methionine</name>
        <dbReference type="ChEBI" id="CHEBI:59789"/>
    </ligand>
</feature>
<feature type="binding site" evidence="2">
    <location>
        <position position="201"/>
    </location>
    <ligand>
        <name>S-adenosyl-L-methionine</name>
        <dbReference type="ChEBI" id="CHEBI:59789"/>
    </ligand>
</feature>
<feature type="binding site" evidence="2">
    <location>
        <position position="206"/>
    </location>
    <ligand>
        <name>S-adenosyl-L-methionine</name>
        <dbReference type="ChEBI" id="CHEBI:59789"/>
    </ligand>
</feature>
<feature type="binding site" evidence="2 3">
    <location>
        <position position="234"/>
    </location>
    <ligand>
        <name>S-adenosyl-L-methionine</name>
        <dbReference type="ChEBI" id="CHEBI:59789"/>
    </ligand>
</feature>
<feature type="binding site" evidence="2">
    <location>
        <position position="235"/>
    </location>
    <ligand>
        <name>S-adenosyl-L-methionine</name>
        <dbReference type="ChEBI" id="CHEBI:59789"/>
    </ligand>
</feature>
<feature type="binding site" evidence="3">
    <location>
        <position position="252"/>
    </location>
    <ligand>
        <name>S-adenosyl-L-methionine</name>
        <dbReference type="ChEBI" id="CHEBI:59789"/>
    </ligand>
</feature>
<feature type="modified residue" description="Phosphoserine" evidence="2">
    <location>
        <position position="203"/>
    </location>
</feature>
<feature type="splice variant" id="VSP_025974" description="In isoform 2." evidence="6">
    <location>
        <begin position="1"/>
        <end position="147"/>
    </location>
</feature>
<feature type="splice variant" id="VSP_025975" description="In isoform 2." evidence="6">
    <original>GLMDYYLMDAASLLPVLALGLQHGDTVLDLCAAPGGKTLALLQTGCCR</original>
    <variation>MVFITSIETQREDTSVSKRLGHTHVVPATQEAETELLENFKNSLGTTG</variation>
    <location>
        <begin position="148"/>
        <end position="195"/>
    </location>
</feature>
<evidence type="ECO:0000250" key="1">
    <source>
        <dbReference type="UniProtKB" id="Q95XR2"/>
    </source>
</evidence>
<evidence type="ECO:0000250" key="2">
    <source>
        <dbReference type="UniProtKB" id="Q96CB9"/>
    </source>
</evidence>
<evidence type="ECO:0000255" key="3">
    <source>
        <dbReference type="PROSITE-ProRule" id="PRU01023"/>
    </source>
</evidence>
<evidence type="ECO:0000269" key="4">
    <source>
    </source>
</evidence>
<evidence type="ECO:0000269" key="5">
    <source>
    </source>
</evidence>
<evidence type="ECO:0000303" key="6">
    <source>
    </source>
</evidence>
<evidence type="ECO:0000303" key="7">
    <source>
    </source>
</evidence>
<evidence type="ECO:0000305" key="8"/>
<evidence type="ECO:0000312" key="9">
    <source>
        <dbReference type="MGI" id="MGI:1919431"/>
    </source>
</evidence>
<sequence>MAAPVLRCVRKLLKLVDFTPVPRRYRYKKKWATTEPQFTASRLALQNFDMTYSVQFGDLWPSIRVSLLSEQKYGALVNNFAAWDSVSAKLEQLSAKDFVSEAISHQKLEPESGLSPTPSLDCSPNLRCFTFSRGDVSRFPPARLGSLGLMDYYLMDAASLLPVLALGLQHGDTVLDLCAAPGGKTLALLQTGCCRNLAANDLSTSRTGRLQKVLHSYVPQDIREGNQVRVTSWDGRKWGELEGDTYDRVLVDVPCTTDRHSLHEEENNIFQRSRKKERQMLPMLQVQLLAAGLLATKPGGHVVYSTCSLSHLQNEYVVQGAIELLANQYNIKVQVEDLSHFRKLFMDTFCFFPSCQVGELVIPNLMVNFGPMYFCKLHRLP</sequence>
<name>NSUN4_MOUSE</name>